<keyword id="KW-0963">Cytoplasm</keyword>
<keyword id="KW-1185">Reference proteome</keyword>
<keyword id="KW-0690">Ribosome biogenesis</keyword>
<keyword id="KW-0694">RNA-binding</keyword>
<keyword id="KW-0699">rRNA-binding</keyword>
<sequence>MKIMARKNQKAPWEEEEEIIWVSKTEMKNDMEDLQKLGEELVGLKPSVLAKFPLSDDLREAINDAQRFKNEAKRRQLQFIGKLMRNEDPEPIQLALDKIRNKHSQATAALHKLETLRDRMIEEGDAVIEEVMVKYPDADRQRFRQLARQAKKEKASNKPPKAFREIFQILKDLYLNEDL</sequence>
<name>DARP_ALIF1</name>
<accession>Q5E7X1</accession>
<feature type="chain" id="PRO_0000257645" description="Dual-action ribosomal maturation protein DarP">
    <location>
        <begin position="1"/>
        <end position="179"/>
    </location>
</feature>
<protein>
    <recommendedName>
        <fullName evidence="1">Dual-action ribosomal maturation protein DarP</fullName>
    </recommendedName>
    <alternativeName>
        <fullName evidence="1">Large ribosomal subunit assembly factor DarP</fullName>
    </alternativeName>
</protein>
<comment type="function">
    <text evidence="1">Member of a network of 50S ribosomal subunit biogenesis factors which assembles along the 30S-50S interface, preventing incorrect 23S rRNA structures from forming. Promotes peptidyl transferase center (PTC) maturation.</text>
</comment>
<comment type="subcellular location">
    <subcellularLocation>
        <location evidence="1">Cytoplasm</location>
    </subcellularLocation>
    <text evidence="1">Associates with late stage pre-50S ribosomal subunits.</text>
</comment>
<comment type="similarity">
    <text evidence="1">Belongs to the DarP family.</text>
</comment>
<dbReference type="EMBL" id="CP000020">
    <property type="protein sequence ID" value="AAW84875.1"/>
    <property type="molecule type" value="Genomic_DNA"/>
</dbReference>
<dbReference type="RefSeq" id="YP_203763.1">
    <property type="nucleotide sequence ID" value="NC_006840.2"/>
</dbReference>
<dbReference type="SMR" id="Q5E7X1"/>
<dbReference type="STRING" id="312309.VF_0380"/>
<dbReference type="EnsemblBacteria" id="AAW84875">
    <property type="protein sequence ID" value="AAW84875"/>
    <property type="gene ID" value="VF_0380"/>
</dbReference>
<dbReference type="KEGG" id="vfi:VF_0380"/>
<dbReference type="PATRIC" id="fig|312309.11.peg.371"/>
<dbReference type="eggNOG" id="COG3028">
    <property type="taxonomic scope" value="Bacteria"/>
</dbReference>
<dbReference type="HOGENOM" id="CLU_106757_2_0_6"/>
<dbReference type="OrthoDB" id="5293604at2"/>
<dbReference type="Proteomes" id="UP000000537">
    <property type="component" value="Chromosome I"/>
</dbReference>
<dbReference type="GO" id="GO:0005829">
    <property type="term" value="C:cytosol"/>
    <property type="evidence" value="ECO:0007669"/>
    <property type="project" value="TreeGrafter"/>
</dbReference>
<dbReference type="GO" id="GO:0043022">
    <property type="term" value="F:ribosome binding"/>
    <property type="evidence" value="ECO:0007669"/>
    <property type="project" value="UniProtKB-UniRule"/>
</dbReference>
<dbReference type="GO" id="GO:0019843">
    <property type="term" value="F:rRNA binding"/>
    <property type="evidence" value="ECO:0007669"/>
    <property type="project" value="UniProtKB-UniRule"/>
</dbReference>
<dbReference type="GO" id="GO:1902626">
    <property type="term" value="P:assembly of large subunit precursor of preribosome"/>
    <property type="evidence" value="ECO:0007669"/>
    <property type="project" value="UniProtKB-UniRule"/>
</dbReference>
<dbReference type="CDD" id="cd16331">
    <property type="entry name" value="YjgA-like"/>
    <property type="match status" value="1"/>
</dbReference>
<dbReference type="FunFam" id="1.10.60.30:FF:000002">
    <property type="entry name" value="UPF0307 protein YjgA"/>
    <property type="match status" value="1"/>
</dbReference>
<dbReference type="Gene3D" id="1.10.60.30">
    <property type="entry name" value="PSPTO4464-like domains"/>
    <property type="match status" value="2"/>
</dbReference>
<dbReference type="HAMAP" id="MF_00765">
    <property type="entry name" value="DarP"/>
    <property type="match status" value="1"/>
</dbReference>
<dbReference type="InterPro" id="IPR006839">
    <property type="entry name" value="DarP"/>
</dbReference>
<dbReference type="InterPro" id="IPR023153">
    <property type="entry name" value="DarP_sf"/>
</dbReference>
<dbReference type="NCBIfam" id="NF003593">
    <property type="entry name" value="PRK05255.1-1"/>
    <property type="match status" value="1"/>
</dbReference>
<dbReference type="PANTHER" id="PTHR38101">
    <property type="entry name" value="UPF0307 PROTEIN YJGA"/>
    <property type="match status" value="1"/>
</dbReference>
<dbReference type="PANTHER" id="PTHR38101:SF1">
    <property type="entry name" value="UPF0307 PROTEIN YJGA"/>
    <property type="match status" value="1"/>
</dbReference>
<dbReference type="Pfam" id="PF04751">
    <property type="entry name" value="DarP"/>
    <property type="match status" value="1"/>
</dbReference>
<dbReference type="PIRSF" id="PIRSF016183">
    <property type="entry name" value="UCP016183"/>
    <property type="match status" value="1"/>
</dbReference>
<dbReference type="SUPFAM" id="SSF158710">
    <property type="entry name" value="PSPTO4464-like"/>
    <property type="match status" value="1"/>
</dbReference>
<reference key="1">
    <citation type="journal article" date="2005" name="Proc. Natl. Acad. Sci. U.S.A.">
        <title>Complete genome sequence of Vibrio fischeri: a symbiotic bacterium with pathogenic congeners.</title>
        <authorList>
            <person name="Ruby E.G."/>
            <person name="Urbanowski M."/>
            <person name="Campbell J."/>
            <person name="Dunn A."/>
            <person name="Faini M."/>
            <person name="Gunsalus R."/>
            <person name="Lostroh P."/>
            <person name="Lupp C."/>
            <person name="McCann J."/>
            <person name="Millikan D."/>
            <person name="Schaefer A."/>
            <person name="Stabb E."/>
            <person name="Stevens A."/>
            <person name="Visick K."/>
            <person name="Whistler C."/>
            <person name="Greenberg E.P."/>
        </authorList>
    </citation>
    <scope>NUCLEOTIDE SEQUENCE [LARGE SCALE GENOMIC DNA]</scope>
    <source>
        <strain>ATCC 700601 / ES114</strain>
    </source>
</reference>
<gene>
    <name evidence="1" type="primary">darP</name>
    <name type="ordered locus">VF_0380</name>
</gene>
<organism>
    <name type="scientific">Aliivibrio fischeri (strain ATCC 700601 / ES114)</name>
    <name type="common">Vibrio fischeri</name>
    <dbReference type="NCBI Taxonomy" id="312309"/>
    <lineage>
        <taxon>Bacteria</taxon>
        <taxon>Pseudomonadati</taxon>
        <taxon>Pseudomonadota</taxon>
        <taxon>Gammaproteobacteria</taxon>
        <taxon>Vibrionales</taxon>
        <taxon>Vibrionaceae</taxon>
        <taxon>Aliivibrio</taxon>
    </lineage>
</organism>
<proteinExistence type="inferred from homology"/>
<evidence type="ECO:0000255" key="1">
    <source>
        <dbReference type="HAMAP-Rule" id="MF_00765"/>
    </source>
</evidence>